<evidence type="ECO:0000255" key="1">
    <source>
        <dbReference type="HAMAP-Rule" id="MF_00120"/>
    </source>
</evidence>
<gene>
    <name evidence="1" type="primary">gatA</name>
    <name type="ordered locus">BCAH187_A0394</name>
</gene>
<name>GATA_BACC7</name>
<comment type="function">
    <text evidence="1">Allows the formation of correctly charged Gln-tRNA(Gln) through the transamidation of misacylated Glu-tRNA(Gln) in organisms which lack glutaminyl-tRNA synthetase. The reaction takes place in the presence of glutamine and ATP through an activated gamma-phospho-Glu-tRNA(Gln).</text>
</comment>
<comment type="catalytic activity">
    <reaction evidence="1">
        <text>L-glutamyl-tRNA(Gln) + L-glutamine + ATP + H2O = L-glutaminyl-tRNA(Gln) + L-glutamate + ADP + phosphate + H(+)</text>
        <dbReference type="Rhea" id="RHEA:17521"/>
        <dbReference type="Rhea" id="RHEA-COMP:9681"/>
        <dbReference type="Rhea" id="RHEA-COMP:9684"/>
        <dbReference type="ChEBI" id="CHEBI:15377"/>
        <dbReference type="ChEBI" id="CHEBI:15378"/>
        <dbReference type="ChEBI" id="CHEBI:29985"/>
        <dbReference type="ChEBI" id="CHEBI:30616"/>
        <dbReference type="ChEBI" id="CHEBI:43474"/>
        <dbReference type="ChEBI" id="CHEBI:58359"/>
        <dbReference type="ChEBI" id="CHEBI:78520"/>
        <dbReference type="ChEBI" id="CHEBI:78521"/>
        <dbReference type="ChEBI" id="CHEBI:456216"/>
        <dbReference type="EC" id="6.3.5.7"/>
    </reaction>
</comment>
<comment type="subunit">
    <text evidence="1">Heterotrimer of A, B and C subunits.</text>
</comment>
<comment type="similarity">
    <text evidence="1">Belongs to the amidase family. GatA subfamily.</text>
</comment>
<protein>
    <recommendedName>
        <fullName evidence="1">Glutamyl-tRNA(Gln) amidotransferase subunit A</fullName>
        <shortName evidence="1">Glu-ADT subunit A</shortName>
        <ecNumber evidence="1">6.3.5.7</ecNumber>
    </recommendedName>
</protein>
<reference key="1">
    <citation type="submission" date="2008-10" db="EMBL/GenBank/DDBJ databases">
        <title>Genome sequence of Bacillus cereus AH187.</title>
        <authorList>
            <person name="Dodson R.J."/>
            <person name="Durkin A.S."/>
            <person name="Rosovitz M.J."/>
            <person name="Rasko D.A."/>
            <person name="Kolsto A.B."/>
            <person name="Okstad O.A."/>
            <person name="Ravel J."/>
            <person name="Sutton G."/>
        </authorList>
    </citation>
    <scope>NUCLEOTIDE SEQUENCE [LARGE SCALE GENOMIC DNA]</scope>
    <source>
        <strain>AH187</strain>
    </source>
</reference>
<dbReference type="EC" id="6.3.5.7" evidence="1"/>
<dbReference type="EMBL" id="CP001177">
    <property type="protein sequence ID" value="ACJ78106.1"/>
    <property type="molecule type" value="Genomic_DNA"/>
</dbReference>
<dbReference type="SMR" id="B7HSY0"/>
<dbReference type="KEGG" id="bcr:BCAH187_A0394"/>
<dbReference type="HOGENOM" id="CLU_009600_0_3_9"/>
<dbReference type="Proteomes" id="UP000002214">
    <property type="component" value="Chromosome"/>
</dbReference>
<dbReference type="GO" id="GO:0030956">
    <property type="term" value="C:glutamyl-tRNA(Gln) amidotransferase complex"/>
    <property type="evidence" value="ECO:0007669"/>
    <property type="project" value="InterPro"/>
</dbReference>
<dbReference type="GO" id="GO:0005524">
    <property type="term" value="F:ATP binding"/>
    <property type="evidence" value="ECO:0007669"/>
    <property type="project" value="UniProtKB-KW"/>
</dbReference>
<dbReference type="GO" id="GO:0050567">
    <property type="term" value="F:glutaminyl-tRNA synthase (glutamine-hydrolyzing) activity"/>
    <property type="evidence" value="ECO:0007669"/>
    <property type="project" value="UniProtKB-UniRule"/>
</dbReference>
<dbReference type="GO" id="GO:0006412">
    <property type="term" value="P:translation"/>
    <property type="evidence" value="ECO:0007669"/>
    <property type="project" value="UniProtKB-UniRule"/>
</dbReference>
<dbReference type="Gene3D" id="3.90.1300.10">
    <property type="entry name" value="Amidase signature (AS) domain"/>
    <property type="match status" value="1"/>
</dbReference>
<dbReference type="HAMAP" id="MF_00120">
    <property type="entry name" value="GatA"/>
    <property type="match status" value="1"/>
</dbReference>
<dbReference type="InterPro" id="IPR000120">
    <property type="entry name" value="Amidase"/>
</dbReference>
<dbReference type="InterPro" id="IPR020556">
    <property type="entry name" value="Amidase_CS"/>
</dbReference>
<dbReference type="InterPro" id="IPR023631">
    <property type="entry name" value="Amidase_dom"/>
</dbReference>
<dbReference type="InterPro" id="IPR036928">
    <property type="entry name" value="AS_sf"/>
</dbReference>
<dbReference type="InterPro" id="IPR004412">
    <property type="entry name" value="GatA"/>
</dbReference>
<dbReference type="NCBIfam" id="TIGR00132">
    <property type="entry name" value="gatA"/>
    <property type="match status" value="1"/>
</dbReference>
<dbReference type="PANTHER" id="PTHR11895:SF151">
    <property type="entry name" value="GLUTAMYL-TRNA(GLN) AMIDOTRANSFERASE SUBUNIT A"/>
    <property type="match status" value="1"/>
</dbReference>
<dbReference type="PANTHER" id="PTHR11895">
    <property type="entry name" value="TRANSAMIDASE"/>
    <property type="match status" value="1"/>
</dbReference>
<dbReference type="Pfam" id="PF01425">
    <property type="entry name" value="Amidase"/>
    <property type="match status" value="1"/>
</dbReference>
<dbReference type="SUPFAM" id="SSF75304">
    <property type="entry name" value="Amidase signature (AS) enzymes"/>
    <property type="match status" value="1"/>
</dbReference>
<dbReference type="PROSITE" id="PS00571">
    <property type="entry name" value="AMIDASES"/>
    <property type="match status" value="1"/>
</dbReference>
<sequence>MSLFDHSVSELHKKLNNKEISVTDLVEESYKRIADVEDNVKAFLTLDEENARAKAKELDAKIGAEDNGLLFGMPIGVKDNIVTNGLRTTCASKMLANFDPIYDATVVQKLKAADTITIGKLNMDEFAMGSSNENSGFYATKNPWNLDYVPGGSSGGSAAAVAAGEVLFSLGSDTGGSIRQPAAYCGVVGLKPTYGRVSRYGLVAFASSLDQIGPITRTVEDNAYLLQAISGLDRMDATSANVEVGNYLAGLTGDVKGLRIAVPKEYLGEGVGEEARESVLAALKVLEGMGATWEEVSLPHSKYALATYYLLSSSEASANLSRFDGVRYGVRSDNVNNLMDLYKNTRSEGFGDEVKRRIMLGTFALSSGYYDAYYKKAQQVRTLIKNDFENVFANYDVIIGPTTPTPAFKVGEKVDDPMTMYANDILTIPVNLAGVPAISVPCGFGANNMPLGLQIIGKHFDEATIYRVAHAFEQATDHHTKKASL</sequence>
<organism>
    <name type="scientific">Bacillus cereus (strain AH187)</name>
    <dbReference type="NCBI Taxonomy" id="405534"/>
    <lineage>
        <taxon>Bacteria</taxon>
        <taxon>Bacillati</taxon>
        <taxon>Bacillota</taxon>
        <taxon>Bacilli</taxon>
        <taxon>Bacillales</taxon>
        <taxon>Bacillaceae</taxon>
        <taxon>Bacillus</taxon>
        <taxon>Bacillus cereus group</taxon>
    </lineage>
</organism>
<proteinExistence type="inferred from homology"/>
<keyword id="KW-0067">ATP-binding</keyword>
<keyword id="KW-0436">Ligase</keyword>
<keyword id="KW-0547">Nucleotide-binding</keyword>
<keyword id="KW-0648">Protein biosynthesis</keyword>
<feature type="chain" id="PRO_1000117606" description="Glutamyl-tRNA(Gln) amidotransferase subunit A">
    <location>
        <begin position="1"/>
        <end position="485"/>
    </location>
</feature>
<feature type="active site" description="Charge relay system" evidence="1">
    <location>
        <position position="78"/>
    </location>
</feature>
<feature type="active site" description="Charge relay system" evidence="1">
    <location>
        <position position="153"/>
    </location>
</feature>
<feature type="active site" description="Acyl-ester intermediate" evidence="1">
    <location>
        <position position="177"/>
    </location>
</feature>
<accession>B7HSY0</accession>